<reference key="1">
    <citation type="journal article" date="2007" name="PLoS ONE">
        <title>A glimpse of streptococcal toxic shock syndrome from comparative genomics of S. suis 2 Chinese isolates.</title>
        <authorList>
            <person name="Chen C."/>
            <person name="Tang J."/>
            <person name="Dong W."/>
            <person name="Wang C."/>
            <person name="Feng Y."/>
            <person name="Wang J."/>
            <person name="Zheng F."/>
            <person name="Pan X."/>
            <person name="Liu D."/>
            <person name="Li M."/>
            <person name="Song Y."/>
            <person name="Zhu X."/>
            <person name="Sun H."/>
            <person name="Feng T."/>
            <person name="Guo Z."/>
            <person name="Ju A."/>
            <person name="Ge J."/>
            <person name="Dong Y."/>
            <person name="Sun W."/>
            <person name="Jiang Y."/>
            <person name="Wang J."/>
            <person name="Yan J."/>
            <person name="Yang H."/>
            <person name="Wang X."/>
            <person name="Gao G.F."/>
            <person name="Yang R."/>
            <person name="Wang J."/>
            <person name="Yu J."/>
        </authorList>
    </citation>
    <scope>NUCLEOTIDE SEQUENCE [LARGE SCALE GENOMIC DNA]</scope>
    <source>
        <strain>98HAH33</strain>
    </source>
</reference>
<feature type="chain" id="PRO_1000056426" description="Beta-ketoacyl-[acyl-carrier-protein] synthase III">
    <location>
        <begin position="1"/>
        <end position="325"/>
    </location>
</feature>
<feature type="region of interest" description="ACP-binding" evidence="1">
    <location>
        <begin position="251"/>
        <end position="255"/>
    </location>
</feature>
<feature type="active site" evidence="1">
    <location>
        <position position="113"/>
    </location>
</feature>
<feature type="active site" evidence="1">
    <location>
        <position position="250"/>
    </location>
</feature>
<feature type="active site" evidence="1">
    <location>
        <position position="280"/>
    </location>
</feature>
<organism>
    <name type="scientific">Streptococcus suis (strain 98HAH33)</name>
    <dbReference type="NCBI Taxonomy" id="391296"/>
    <lineage>
        <taxon>Bacteria</taxon>
        <taxon>Bacillati</taxon>
        <taxon>Bacillota</taxon>
        <taxon>Bacilli</taxon>
        <taxon>Lactobacillales</taxon>
        <taxon>Streptococcaceae</taxon>
        <taxon>Streptococcus</taxon>
    </lineage>
</organism>
<dbReference type="EC" id="2.3.1.180" evidence="1"/>
<dbReference type="EMBL" id="CP000408">
    <property type="protein sequence ID" value="ABP92969.1"/>
    <property type="molecule type" value="Genomic_DNA"/>
</dbReference>
<dbReference type="SMR" id="A4W3N0"/>
<dbReference type="KEGG" id="ssv:SSU98_1811"/>
<dbReference type="HOGENOM" id="CLU_039592_4_1_9"/>
<dbReference type="UniPathway" id="UPA00094"/>
<dbReference type="GO" id="GO:0005737">
    <property type="term" value="C:cytoplasm"/>
    <property type="evidence" value="ECO:0007669"/>
    <property type="project" value="UniProtKB-SubCell"/>
</dbReference>
<dbReference type="GO" id="GO:0004315">
    <property type="term" value="F:3-oxoacyl-[acyl-carrier-protein] synthase activity"/>
    <property type="evidence" value="ECO:0007669"/>
    <property type="project" value="InterPro"/>
</dbReference>
<dbReference type="GO" id="GO:0033818">
    <property type="term" value="F:beta-ketoacyl-acyl-carrier-protein synthase III activity"/>
    <property type="evidence" value="ECO:0007669"/>
    <property type="project" value="UniProtKB-UniRule"/>
</dbReference>
<dbReference type="GO" id="GO:0006633">
    <property type="term" value="P:fatty acid biosynthetic process"/>
    <property type="evidence" value="ECO:0007669"/>
    <property type="project" value="UniProtKB-UniRule"/>
</dbReference>
<dbReference type="CDD" id="cd00830">
    <property type="entry name" value="KAS_III"/>
    <property type="match status" value="1"/>
</dbReference>
<dbReference type="Gene3D" id="3.40.47.10">
    <property type="match status" value="1"/>
</dbReference>
<dbReference type="HAMAP" id="MF_01815">
    <property type="entry name" value="FabH"/>
    <property type="match status" value="1"/>
</dbReference>
<dbReference type="InterPro" id="IPR013747">
    <property type="entry name" value="ACP_syn_III_C"/>
</dbReference>
<dbReference type="InterPro" id="IPR013751">
    <property type="entry name" value="ACP_syn_III_N"/>
</dbReference>
<dbReference type="InterPro" id="IPR004655">
    <property type="entry name" value="FabH"/>
</dbReference>
<dbReference type="InterPro" id="IPR016039">
    <property type="entry name" value="Thiolase-like"/>
</dbReference>
<dbReference type="NCBIfam" id="TIGR00747">
    <property type="entry name" value="fabH"/>
    <property type="match status" value="1"/>
</dbReference>
<dbReference type="NCBIfam" id="NF006829">
    <property type="entry name" value="PRK09352.1"/>
    <property type="match status" value="1"/>
</dbReference>
<dbReference type="PANTHER" id="PTHR43091">
    <property type="entry name" value="3-OXOACYL-[ACYL-CARRIER-PROTEIN] SYNTHASE"/>
    <property type="match status" value="1"/>
</dbReference>
<dbReference type="PANTHER" id="PTHR43091:SF1">
    <property type="entry name" value="BETA-KETOACYL-[ACYL-CARRIER-PROTEIN] SYNTHASE III, CHLOROPLASTIC"/>
    <property type="match status" value="1"/>
</dbReference>
<dbReference type="Pfam" id="PF08545">
    <property type="entry name" value="ACP_syn_III"/>
    <property type="match status" value="1"/>
</dbReference>
<dbReference type="Pfam" id="PF08541">
    <property type="entry name" value="ACP_syn_III_C"/>
    <property type="match status" value="1"/>
</dbReference>
<dbReference type="SUPFAM" id="SSF53901">
    <property type="entry name" value="Thiolase-like"/>
    <property type="match status" value="1"/>
</dbReference>
<evidence type="ECO:0000255" key="1">
    <source>
        <dbReference type="HAMAP-Rule" id="MF_01815"/>
    </source>
</evidence>
<sequence>MRNHAKISQVAHYLPKKIVTNDDLAQRMETSDEWIRSRTGIGQRHIVTGETTSDLASQVARKLLEKSQLDASEIDFIIVATITPDASMPSTAAMVQAAIGAKNAFAYDLVAACSGFVFALSTAEKLLASGVYKRGLVIGAETLSRSVDWSDRSTAVLFGDGAGGVLLEACEQPTFLAEILRTDGGRGASLTAGIDQKETPFSTQSCQQPFIQMEGRAIFEFATRDVTATMAELLEQADMTVDCVDYFLLHQANIRILDKMARKLGVAREKFPANMDKYGNTSAASLPILLSECVESGMLRLDGSQTILMAGFGGGLTWGTLLLQL</sequence>
<gene>
    <name evidence="1" type="primary">fabH</name>
    <name type="ordered locus">SSU98_1811</name>
</gene>
<accession>A4W3N0</accession>
<keyword id="KW-0012">Acyltransferase</keyword>
<keyword id="KW-0963">Cytoplasm</keyword>
<keyword id="KW-0275">Fatty acid biosynthesis</keyword>
<keyword id="KW-0276">Fatty acid metabolism</keyword>
<keyword id="KW-0444">Lipid biosynthesis</keyword>
<keyword id="KW-0443">Lipid metabolism</keyword>
<keyword id="KW-0511">Multifunctional enzyme</keyword>
<keyword id="KW-0808">Transferase</keyword>
<protein>
    <recommendedName>
        <fullName evidence="1">Beta-ketoacyl-[acyl-carrier-protein] synthase III</fullName>
        <shortName evidence="1">Beta-ketoacyl-ACP synthase III</shortName>
        <shortName evidence="1">KAS III</shortName>
        <ecNumber evidence="1">2.3.1.180</ecNumber>
    </recommendedName>
    <alternativeName>
        <fullName evidence="1">3-oxoacyl-[acyl-carrier-protein] synthase 3</fullName>
    </alternativeName>
    <alternativeName>
        <fullName evidence="1">3-oxoacyl-[acyl-carrier-protein] synthase III</fullName>
    </alternativeName>
</protein>
<comment type="function">
    <text evidence="1">Catalyzes the condensation reaction of fatty acid synthesis by the addition to an acyl acceptor of two carbons from malonyl-ACP. Catalyzes the first condensation reaction which initiates fatty acid synthesis and may therefore play a role in governing the total rate of fatty acid production. Possesses both acetoacetyl-ACP synthase and acetyl transacylase activities. Its substrate specificity determines the biosynthesis of branched-chain and/or straight-chain of fatty acids.</text>
</comment>
<comment type="catalytic activity">
    <reaction evidence="1">
        <text>malonyl-[ACP] + acetyl-CoA + H(+) = 3-oxobutanoyl-[ACP] + CO2 + CoA</text>
        <dbReference type="Rhea" id="RHEA:12080"/>
        <dbReference type="Rhea" id="RHEA-COMP:9623"/>
        <dbReference type="Rhea" id="RHEA-COMP:9625"/>
        <dbReference type="ChEBI" id="CHEBI:15378"/>
        <dbReference type="ChEBI" id="CHEBI:16526"/>
        <dbReference type="ChEBI" id="CHEBI:57287"/>
        <dbReference type="ChEBI" id="CHEBI:57288"/>
        <dbReference type="ChEBI" id="CHEBI:78449"/>
        <dbReference type="ChEBI" id="CHEBI:78450"/>
        <dbReference type="EC" id="2.3.1.180"/>
    </reaction>
</comment>
<comment type="pathway">
    <text evidence="1">Lipid metabolism; fatty acid biosynthesis.</text>
</comment>
<comment type="subunit">
    <text evidence="1">Homodimer.</text>
</comment>
<comment type="subcellular location">
    <subcellularLocation>
        <location evidence="1">Cytoplasm</location>
    </subcellularLocation>
</comment>
<comment type="domain">
    <text evidence="1">The last Arg residue of the ACP-binding site is essential for the weak association between ACP/AcpP and FabH.</text>
</comment>
<comment type="similarity">
    <text evidence="1">Belongs to the thiolase-like superfamily. FabH family.</text>
</comment>
<name>FABH_STRS2</name>
<proteinExistence type="inferred from homology"/>